<comment type="function">
    <text evidence="1">Cell wall formation. Adds enolpyruvyl to UDP-N-acetylglucosamine.</text>
</comment>
<comment type="catalytic activity">
    <reaction evidence="1">
        <text>phosphoenolpyruvate + UDP-N-acetyl-alpha-D-glucosamine = UDP-N-acetyl-3-O-(1-carboxyvinyl)-alpha-D-glucosamine + phosphate</text>
        <dbReference type="Rhea" id="RHEA:18681"/>
        <dbReference type="ChEBI" id="CHEBI:43474"/>
        <dbReference type="ChEBI" id="CHEBI:57705"/>
        <dbReference type="ChEBI" id="CHEBI:58702"/>
        <dbReference type="ChEBI" id="CHEBI:68483"/>
        <dbReference type="EC" id="2.5.1.7"/>
    </reaction>
</comment>
<comment type="pathway">
    <text evidence="1">Cell wall biogenesis; peptidoglycan biosynthesis.</text>
</comment>
<comment type="subcellular location">
    <subcellularLocation>
        <location evidence="1">Cytoplasm</location>
    </subcellularLocation>
</comment>
<comment type="similarity">
    <text evidence="1">Belongs to the EPSP synthase family. MurA subfamily.</text>
</comment>
<sequence>MAKIVVTGGAALHGEVSISGAKNAVLPILCATLLADEPVEITNVPHLHDVVTTVKLLGELGAKVTIDQGTLSRGSAIVVDPRPVNQHVAPYELVKTMRASILVLGPLLARFGAAEVSLPGGCAIGSRPVDQHIKGLQALGAEIVVENGFIKASAKRLKGGHFTFDMVSVTGTENVLMGAVLAEGTTVLDNCAMEPEVTDLAHCLIALGAKIEGLGTARLVIEGVERLSGGRHEVLPDRIETGTFLVAAAMTGGKVTVNRARPNTMDAVLSKLVEAGAKIETTDDSITLDMQGRRPKAVNLTTAPYPAFPTDMQAQFMALNCVADGVGVINETIFENRFMHVNELLRLGADIQVEGHTAIVRGSEHLSGAPVMATDLRASASLILAGLMASGDTTIDRIYHLDRGYENIEEKLSSLGATIRRVP</sequence>
<keyword id="KW-0002">3D-structure</keyword>
<keyword id="KW-0131">Cell cycle</keyword>
<keyword id="KW-0132">Cell division</keyword>
<keyword id="KW-0133">Cell shape</keyword>
<keyword id="KW-0961">Cell wall biogenesis/degradation</keyword>
<keyword id="KW-0963">Cytoplasm</keyword>
<keyword id="KW-0573">Peptidoglycan synthesis</keyword>
<keyword id="KW-0670">Pyruvate</keyword>
<keyword id="KW-1185">Reference proteome</keyword>
<keyword id="KW-0808">Transferase</keyword>
<gene>
    <name evidence="1" type="primary">murA</name>
    <name type="ordered locus">Smlt1119</name>
</gene>
<proteinExistence type="evidence at protein level"/>
<accession>B2FRX1</accession>
<name>MURA_STRMK</name>
<protein>
    <recommendedName>
        <fullName evidence="1">UDP-N-acetylglucosamine 1-carboxyvinyltransferase</fullName>
        <ecNumber evidence="1">2.5.1.7</ecNumber>
    </recommendedName>
    <alternativeName>
        <fullName evidence="1">Enoylpyruvate transferase</fullName>
    </alternativeName>
    <alternativeName>
        <fullName evidence="1">UDP-N-acetylglucosamine enolpyruvyl transferase</fullName>
        <shortName evidence="1">EPT</shortName>
    </alternativeName>
</protein>
<evidence type="ECO:0000255" key="1">
    <source>
        <dbReference type="HAMAP-Rule" id="MF_00111"/>
    </source>
</evidence>
<evidence type="ECO:0007829" key="2">
    <source>
        <dbReference type="PDB" id="6WFM"/>
    </source>
</evidence>
<feature type="chain" id="PRO_1000094727" description="UDP-N-acetylglucosamine 1-carboxyvinyltransferase">
    <location>
        <begin position="1"/>
        <end position="423"/>
    </location>
</feature>
<feature type="active site" description="Proton donor" evidence="1">
    <location>
        <position position="122"/>
    </location>
</feature>
<feature type="binding site" evidence="1">
    <location>
        <begin position="22"/>
        <end position="23"/>
    </location>
    <ligand>
        <name>phosphoenolpyruvate</name>
        <dbReference type="ChEBI" id="CHEBI:58702"/>
    </ligand>
</feature>
<feature type="binding site" evidence="1">
    <location>
        <position position="98"/>
    </location>
    <ligand>
        <name>UDP-N-acetyl-alpha-D-glucosamine</name>
        <dbReference type="ChEBI" id="CHEBI:57705"/>
    </ligand>
</feature>
<feature type="binding site" evidence="1">
    <location>
        <begin position="127"/>
        <end position="131"/>
    </location>
    <ligand>
        <name>UDP-N-acetyl-alpha-D-glucosamine</name>
        <dbReference type="ChEBI" id="CHEBI:57705"/>
    </ligand>
</feature>
<feature type="binding site" evidence="1">
    <location>
        <position position="311"/>
    </location>
    <ligand>
        <name>UDP-N-acetyl-alpha-D-glucosamine</name>
        <dbReference type="ChEBI" id="CHEBI:57705"/>
    </ligand>
</feature>
<feature type="binding site" evidence="1">
    <location>
        <position position="333"/>
    </location>
    <ligand>
        <name>UDP-N-acetyl-alpha-D-glucosamine</name>
        <dbReference type="ChEBI" id="CHEBI:57705"/>
    </ligand>
</feature>
<feature type="modified residue" description="2-(S-cysteinyl)pyruvic acid O-phosphothioketal" evidence="1">
    <location>
        <position position="122"/>
    </location>
</feature>
<feature type="strand" evidence="2">
    <location>
        <begin position="1"/>
        <end position="7"/>
    </location>
</feature>
<feature type="strand" evidence="2">
    <location>
        <begin position="13"/>
        <end position="17"/>
    </location>
</feature>
<feature type="helix" evidence="2">
    <location>
        <begin position="22"/>
        <end position="31"/>
    </location>
</feature>
<feature type="helix" evidence="2">
    <location>
        <begin position="32"/>
        <end position="34"/>
    </location>
</feature>
<feature type="strand" evidence="2">
    <location>
        <begin position="35"/>
        <end position="37"/>
    </location>
</feature>
<feature type="strand" evidence="2">
    <location>
        <begin position="39"/>
        <end position="44"/>
    </location>
</feature>
<feature type="helix" evidence="2">
    <location>
        <begin position="48"/>
        <end position="59"/>
    </location>
</feature>
<feature type="strand" evidence="2">
    <location>
        <begin position="63"/>
        <end position="67"/>
    </location>
</feature>
<feature type="strand" evidence="2">
    <location>
        <begin position="75"/>
        <end position="80"/>
    </location>
</feature>
<feature type="helix" evidence="2">
    <location>
        <begin position="91"/>
        <end position="94"/>
    </location>
</feature>
<feature type="helix" evidence="2">
    <location>
        <begin position="98"/>
        <end position="103"/>
    </location>
</feature>
<feature type="helix" evidence="2">
    <location>
        <begin position="104"/>
        <end position="111"/>
    </location>
</feature>
<feature type="strand" evidence="2">
    <location>
        <begin position="112"/>
        <end position="117"/>
    </location>
</feature>
<feature type="helix" evidence="2">
    <location>
        <begin position="130"/>
        <end position="138"/>
    </location>
</feature>
<feature type="strand" evidence="2">
    <location>
        <begin position="142"/>
        <end position="146"/>
    </location>
</feature>
<feature type="strand" evidence="2">
    <location>
        <begin position="149"/>
        <end position="153"/>
    </location>
</feature>
<feature type="strand" evidence="2">
    <location>
        <begin position="161"/>
        <end position="163"/>
    </location>
</feature>
<feature type="helix" evidence="2">
    <location>
        <begin position="169"/>
        <end position="179"/>
    </location>
</feature>
<feature type="strand" evidence="2">
    <location>
        <begin position="182"/>
        <end position="190"/>
    </location>
</feature>
<feature type="helix" evidence="2">
    <location>
        <begin position="195"/>
        <end position="206"/>
    </location>
</feature>
<feature type="strand" evidence="2">
    <location>
        <begin position="210"/>
        <end position="212"/>
    </location>
</feature>
<feature type="strand" evidence="2">
    <location>
        <begin position="219"/>
        <end position="222"/>
    </location>
</feature>
<feature type="strand" evidence="2">
    <location>
        <begin position="230"/>
        <end position="233"/>
    </location>
</feature>
<feature type="helix" evidence="2">
    <location>
        <begin position="238"/>
        <end position="250"/>
    </location>
</feature>
<feature type="strand" evidence="2">
    <location>
        <begin position="254"/>
        <end position="259"/>
    </location>
</feature>
<feature type="helix" evidence="2">
    <location>
        <begin position="262"/>
        <end position="264"/>
    </location>
</feature>
<feature type="helix" evidence="2">
    <location>
        <begin position="266"/>
        <end position="274"/>
    </location>
</feature>
<feature type="strand" evidence="2">
    <location>
        <begin position="278"/>
        <end position="281"/>
    </location>
</feature>
<feature type="strand" evidence="2">
    <location>
        <begin position="283"/>
        <end position="289"/>
    </location>
</feature>
<feature type="helix" evidence="2">
    <location>
        <begin position="310"/>
        <end position="312"/>
    </location>
</feature>
<feature type="helix" evidence="2">
    <location>
        <begin position="313"/>
        <end position="321"/>
    </location>
</feature>
<feature type="strand" evidence="2">
    <location>
        <begin position="323"/>
        <end position="330"/>
    </location>
</feature>
<feature type="helix" evidence="2">
    <location>
        <begin position="341"/>
        <end position="346"/>
    </location>
</feature>
<feature type="strand" evidence="2">
    <location>
        <begin position="350"/>
        <end position="354"/>
    </location>
</feature>
<feature type="strand" evidence="2">
    <location>
        <begin position="357"/>
        <end position="361"/>
    </location>
</feature>
<feature type="strand" evidence="2">
    <location>
        <begin position="370"/>
        <end position="373"/>
    </location>
</feature>
<feature type="helix" evidence="2">
    <location>
        <begin position="376"/>
        <end position="386"/>
    </location>
</feature>
<feature type="strand" evidence="2">
    <location>
        <begin position="389"/>
        <end position="398"/>
    </location>
</feature>
<feature type="helix" evidence="2">
    <location>
        <begin position="399"/>
        <end position="401"/>
    </location>
</feature>
<feature type="helix" evidence="2">
    <location>
        <begin position="404"/>
        <end position="406"/>
    </location>
</feature>
<feature type="helix" evidence="2">
    <location>
        <begin position="408"/>
        <end position="414"/>
    </location>
</feature>
<feature type="strand" evidence="2">
    <location>
        <begin position="418"/>
        <end position="422"/>
    </location>
</feature>
<reference key="1">
    <citation type="journal article" date="2008" name="Genome Biol.">
        <title>The complete genome, comparative and functional analysis of Stenotrophomonas maltophilia reveals an organism heavily shielded by drug resistance determinants.</title>
        <authorList>
            <person name="Crossman L.C."/>
            <person name="Gould V.C."/>
            <person name="Dow J.M."/>
            <person name="Vernikos G.S."/>
            <person name="Okazaki A."/>
            <person name="Sebaihia M."/>
            <person name="Saunders D."/>
            <person name="Arrowsmith C."/>
            <person name="Carver T."/>
            <person name="Peters N."/>
            <person name="Adlem E."/>
            <person name="Kerhornou A."/>
            <person name="Lord A."/>
            <person name="Murphy L."/>
            <person name="Seeger K."/>
            <person name="Squares R."/>
            <person name="Rutter S."/>
            <person name="Quail M.A."/>
            <person name="Rajandream M.A."/>
            <person name="Harris D."/>
            <person name="Churcher C."/>
            <person name="Bentley S.D."/>
            <person name="Parkhill J."/>
            <person name="Thomson N.R."/>
            <person name="Avison M.B."/>
        </authorList>
    </citation>
    <scope>NUCLEOTIDE SEQUENCE [LARGE SCALE GENOMIC DNA]</scope>
    <source>
        <strain>K279a</strain>
    </source>
</reference>
<dbReference type="EC" id="2.5.1.7" evidence="1"/>
<dbReference type="EMBL" id="AM743169">
    <property type="protein sequence ID" value="CAQ44676.1"/>
    <property type="molecule type" value="Genomic_DNA"/>
</dbReference>
<dbReference type="RefSeq" id="WP_005408397.1">
    <property type="nucleotide sequence ID" value="NC_010943.1"/>
</dbReference>
<dbReference type="PDB" id="6WFM">
    <property type="method" value="X-ray"/>
    <property type="resolution" value="1.95 A"/>
    <property type="chains" value="A/B=1-423"/>
</dbReference>
<dbReference type="PDBsum" id="6WFM"/>
<dbReference type="SMR" id="B2FRX1"/>
<dbReference type="EnsemblBacteria" id="CAQ44676">
    <property type="protein sequence ID" value="CAQ44676"/>
    <property type="gene ID" value="Smlt1119"/>
</dbReference>
<dbReference type="KEGG" id="sml:Smlt1119"/>
<dbReference type="eggNOG" id="COG0766">
    <property type="taxonomic scope" value="Bacteria"/>
</dbReference>
<dbReference type="HOGENOM" id="CLU_027387_0_0_6"/>
<dbReference type="UniPathway" id="UPA00219"/>
<dbReference type="Proteomes" id="UP000008840">
    <property type="component" value="Chromosome"/>
</dbReference>
<dbReference type="GO" id="GO:0005737">
    <property type="term" value="C:cytoplasm"/>
    <property type="evidence" value="ECO:0007669"/>
    <property type="project" value="UniProtKB-SubCell"/>
</dbReference>
<dbReference type="GO" id="GO:0008760">
    <property type="term" value="F:UDP-N-acetylglucosamine 1-carboxyvinyltransferase activity"/>
    <property type="evidence" value="ECO:0007669"/>
    <property type="project" value="UniProtKB-UniRule"/>
</dbReference>
<dbReference type="GO" id="GO:0051301">
    <property type="term" value="P:cell division"/>
    <property type="evidence" value="ECO:0007669"/>
    <property type="project" value="UniProtKB-KW"/>
</dbReference>
<dbReference type="GO" id="GO:0071555">
    <property type="term" value="P:cell wall organization"/>
    <property type="evidence" value="ECO:0007669"/>
    <property type="project" value="UniProtKB-KW"/>
</dbReference>
<dbReference type="GO" id="GO:0009252">
    <property type="term" value="P:peptidoglycan biosynthetic process"/>
    <property type="evidence" value="ECO:0007669"/>
    <property type="project" value="UniProtKB-UniRule"/>
</dbReference>
<dbReference type="GO" id="GO:0008360">
    <property type="term" value="P:regulation of cell shape"/>
    <property type="evidence" value="ECO:0007669"/>
    <property type="project" value="UniProtKB-KW"/>
</dbReference>
<dbReference type="GO" id="GO:0019277">
    <property type="term" value="P:UDP-N-acetylgalactosamine biosynthetic process"/>
    <property type="evidence" value="ECO:0007669"/>
    <property type="project" value="InterPro"/>
</dbReference>
<dbReference type="CDD" id="cd01555">
    <property type="entry name" value="UdpNAET"/>
    <property type="match status" value="1"/>
</dbReference>
<dbReference type="FunFam" id="3.65.10.10:FF:000002">
    <property type="entry name" value="UDP-N-acetylglucosamine 1-carboxyvinyltransferase"/>
    <property type="match status" value="1"/>
</dbReference>
<dbReference type="Gene3D" id="3.65.10.10">
    <property type="entry name" value="Enolpyruvate transferase domain"/>
    <property type="match status" value="2"/>
</dbReference>
<dbReference type="HAMAP" id="MF_00111">
    <property type="entry name" value="MurA"/>
    <property type="match status" value="1"/>
</dbReference>
<dbReference type="InterPro" id="IPR001986">
    <property type="entry name" value="Enolpyruvate_Tfrase_dom"/>
</dbReference>
<dbReference type="InterPro" id="IPR036968">
    <property type="entry name" value="Enolpyruvate_Tfrase_sf"/>
</dbReference>
<dbReference type="InterPro" id="IPR050068">
    <property type="entry name" value="MurA_subfamily"/>
</dbReference>
<dbReference type="InterPro" id="IPR013792">
    <property type="entry name" value="RNA3'P_cycl/enolpyr_Trfase_a/b"/>
</dbReference>
<dbReference type="InterPro" id="IPR005750">
    <property type="entry name" value="UDP_GlcNAc_COvinyl_MurA"/>
</dbReference>
<dbReference type="NCBIfam" id="TIGR01072">
    <property type="entry name" value="murA"/>
    <property type="match status" value="1"/>
</dbReference>
<dbReference type="NCBIfam" id="NF006873">
    <property type="entry name" value="PRK09369.1"/>
    <property type="match status" value="1"/>
</dbReference>
<dbReference type="PANTHER" id="PTHR43783">
    <property type="entry name" value="UDP-N-ACETYLGLUCOSAMINE 1-CARBOXYVINYLTRANSFERASE"/>
    <property type="match status" value="1"/>
</dbReference>
<dbReference type="PANTHER" id="PTHR43783:SF1">
    <property type="entry name" value="UDP-N-ACETYLGLUCOSAMINE 1-CARBOXYVINYLTRANSFERASE"/>
    <property type="match status" value="1"/>
</dbReference>
<dbReference type="Pfam" id="PF00275">
    <property type="entry name" value="EPSP_synthase"/>
    <property type="match status" value="1"/>
</dbReference>
<dbReference type="SUPFAM" id="SSF55205">
    <property type="entry name" value="EPT/RTPC-like"/>
    <property type="match status" value="1"/>
</dbReference>
<organism>
    <name type="scientific">Stenotrophomonas maltophilia (strain K279a)</name>
    <dbReference type="NCBI Taxonomy" id="522373"/>
    <lineage>
        <taxon>Bacteria</taxon>
        <taxon>Pseudomonadati</taxon>
        <taxon>Pseudomonadota</taxon>
        <taxon>Gammaproteobacteria</taxon>
        <taxon>Lysobacterales</taxon>
        <taxon>Lysobacteraceae</taxon>
        <taxon>Stenotrophomonas</taxon>
        <taxon>Stenotrophomonas maltophilia group</taxon>
    </lineage>
</organism>